<feature type="chain" id="PRO_1000019201" description="Enolase">
    <location>
        <begin position="1"/>
        <end position="426"/>
    </location>
</feature>
<feature type="active site" description="Proton donor" evidence="1">
    <location>
        <position position="205"/>
    </location>
</feature>
<feature type="active site" description="Proton acceptor" evidence="1">
    <location>
        <position position="335"/>
    </location>
</feature>
<feature type="binding site" evidence="1">
    <location>
        <position position="163"/>
    </location>
    <ligand>
        <name>(2R)-2-phosphoglycerate</name>
        <dbReference type="ChEBI" id="CHEBI:58289"/>
    </ligand>
</feature>
<feature type="binding site" evidence="1">
    <location>
        <position position="242"/>
    </location>
    <ligand>
        <name>Mg(2+)</name>
        <dbReference type="ChEBI" id="CHEBI:18420"/>
    </ligand>
</feature>
<feature type="binding site" evidence="1">
    <location>
        <position position="283"/>
    </location>
    <ligand>
        <name>Mg(2+)</name>
        <dbReference type="ChEBI" id="CHEBI:18420"/>
    </ligand>
</feature>
<feature type="binding site" evidence="1">
    <location>
        <position position="310"/>
    </location>
    <ligand>
        <name>Mg(2+)</name>
        <dbReference type="ChEBI" id="CHEBI:18420"/>
    </ligand>
</feature>
<feature type="binding site" evidence="1">
    <location>
        <position position="335"/>
    </location>
    <ligand>
        <name>(2R)-2-phosphoglycerate</name>
        <dbReference type="ChEBI" id="CHEBI:58289"/>
    </ligand>
</feature>
<feature type="binding site" evidence="1">
    <location>
        <position position="364"/>
    </location>
    <ligand>
        <name>(2R)-2-phosphoglycerate</name>
        <dbReference type="ChEBI" id="CHEBI:58289"/>
    </ligand>
</feature>
<feature type="binding site" evidence="1">
    <location>
        <position position="365"/>
    </location>
    <ligand>
        <name>(2R)-2-phosphoglycerate</name>
        <dbReference type="ChEBI" id="CHEBI:58289"/>
    </ligand>
</feature>
<feature type="binding site" evidence="1">
    <location>
        <position position="386"/>
    </location>
    <ligand>
        <name>(2R)-2-phosphoglycerate</name>
        <dbReference type="ChEBI" id="CHEBI:58289"/>
    </ligand>
</feature>
<comment type="function">
    <text evidence="1">Catalyzes the reversible conversion of 2-phosphoglycerate (2-PG) into phosphoenolpyruvate (PEP). It is essential for the degradation of carbohydrates via glycolysis.</text>
</comment>
<comment type="catalytic activity">
    <reaction evidence="1">
        <text>(2R)-2-phosphoglycerate = phosphoenolpyruvate + H2O</text>
        <dbReference type="Rhea" id="RHEA:10164"/>
        <dbReference type="ChEBI" id="CHEBI:15377"/>
        <dbReference type="ChEBI" id="CHEBI:58289"/>
        <dbReference type="ChEBI" id="CHEBI:58702"/>
        <dbReference type="EC" id="4.2.1.11"/>
    </reaction>
</comment>
<comment type="cofactor">
    <cofactor evidence="1">
        <name>Mg(2+)</name>
        <dbReference type="ChEBI" id="CHEBI:18420"/>
    </cofactor>
    <text evidence="1">Binds a second Mg(2+) ion via substrate during catalysis.</text>
</comment>
<comment type="pathway">
    <text evidence="1">Carbohydrate degradation; glycolysis; pyruvate from D-glyceraldehyde 3-phosphate: step 4/5.</text>
</comment>
<comment type="subcellular location">
    <subcellularLocation>
        <location evidence="1">Cytoplasm</location>
    </subcellularLocation>
    <subcellularLocation>
        <location evidence="1">Secreted</location>
    </subcellularLocation>
    <subcellularLocation>
        <location evidence="1">Cell surface</location>
    </subcellularLocation>
    <text evidence="1">Fractions of enolase are present in both the cytoplasm and on the cell surface.</text>
</comment>
<comment type="similarity">
    <text evidence="1">Belongs to the enolase family.</text>
</comment>
<proteinExistence type="inferred from homology"/>
<dbReference type="EC" id="4.2.1.11" evidence="1"/>
<dbReference type="EMBL" id="AM711867">
    <property type="protein sequence ID" value="CAN02335.1"/>
    <property type="molecule type" value="Genomic_DNA"/>
</dbReference>
<dbReference type="RefSeq" id="WP_012038953.1">
    <property type="nucleotide sequence ID" value="NC_009480.1"/>
</dbReference>
<dbReference type="SMR" id="A5CTA8"/>
<dbReference type="GeneID" id="92948260"/>
<dbReference type="KEGG" id="cmi:CMM_2263"/>
<dbReference type="eggNOG" id="COG0148">
    <property type="taxonomic scope" value="Bacteria"/>
</dbReference>
<dbReference type="HOGENOM" id="CLU_031223_2_1_11"/>
<dbReference type="OrthoDB" id="9804716at2"/>
<dbReference type="UniPathway" id="UPA00109">
    <property type="reaction ID" value="UER00187"/>
</dbReference>
<dbReference type="Proteomes" id="UP000001564">
    <property type="component" value="Chromosome"/>
</dbReference>
<dbReference type="GO" id="GO:0009986">
    <property type="term" value="C:cell surface"/>
    <property type="evidence" value="ECO:0007669"/>
    <property type="project" value="UniProtKB-SubCell"/>
</dbReference>
<dbReference type="GO" id="GO:0005576">
    <property type="term" value="C:extracellular region"/>
    <property type="evidence" value="ECO:0007669"/>
    <property type="project" value="UniProtKB-SubCell"/>
</dbReference>
<dbReference type="GO" id="GO:0000015">
    <property type="term" value="C:phosphopyruvate hydratase complex"/>
    <property type="evidence" value="ECO:0007669"/>
    <property type="project" value="InterPro"/>
</dbReference>
<dbReference type="GO" id="GO:0000287">
    <property type="term" value="F:magnesium ion binding"/>
    <property type="evidence" value="ECO:0007669"/>
    <property type="project" value="UniProtKB-UniRule"/>
</dbReference>
<dbReference type="GO" id="GO:0004634">
    <property type="term" value="F:phosphopyruvate hydratase activity"/>
    <property type="evidence" value="ECO:0007669"/>
    <property type="project" value="UniProtKB-UniRule"/>
</dbReference>
<dbReference type="GO" id="GO:0006096">
    <property type="term" value="P:glycolytic process"/>
    <property type="evidence" value="ECO:0007669"/>
    <property type="project" value="UniProtKB-UniRule"/>
</dbReference>
<dbReference type="CDD" id="cd03313">
    <property type="entry name" value="enolase"/>
    <property type="match status" value="1"/>
</dbReference>
<dbReference type="FunFam" id="3.20.20.120:FF:000001">
    <property type="entry name" value="Enolase"/>
    <property type="match status" value="1"/>
</dbReference>
<dbReference type="FunFam" id="3.30.390.10:FF:000001">
    <property type="entry name" value="Enolase"/>
    <property type="match status" value="1"/>
</dbReference>
<dbReference type="Gene3D" id="3.20.20.120">
    <property type="entry name" value="Enolase-like C-terminal domain"/>
    <property type="match status" value="1"/>
</dbReference>
<dbReference type="Gene3D" id="3.30.390.10">
    <property type="entry name" value="Enolase-like, N-terminal domain"/>
    <property type="match status" value="1"/>
</dbReference>
<dbReference type="HAMAP" id="MF_00318">
    <property type="entry name" value="Enolase"/>
    <property type="match status" value="1"/>
</dbReference>
<dbReference type="InterPro" id="IPR000941">
    <property type="entry name" value="Enolase"/>
</dbReference>
<dbReference type="InterPro" id="IPR036849">
    <property type="entry name" value="Enolase-like_C_sf"/>
</dbReference>
<dbReference type="InterPro" id="IPR029017">
    <property type="entry name" value="Enolase-like_N"/>
</dbReference>
<dbReference type="InterPro" id="IPR020810">
    <property type="entry name" value="Enolase_C"/>
</dbReference>
<dbReference type="InterPro" id="IPR020809">
    <property type="entry name" value="Enolase_CS"/>
</dbReference>
<dbReference type="InterPro" id="IPR020811">
    <property type="entry name" value="Enolase_N"/>
</dbReference>
<dbReference type="NCBIfam" id="TIGR01060">
    <property type="entry name" value="eno"/>
    <property type="match status" value="1"/>
</dbReference>
<dbReference type="PANTHER" id="PTHR11902">
    <property type="entry name" value="ENOLASE"/>
    <property type="match status" value="1"/>
</dbReference>
<dbReference type="PANTHER" id="PTHR11902:SF1">
    <property type="entry name" value="ENOLASE"/>
    <property type="match status" value="1"/>
</dbReference>
<dbReference type="Pfam" id="PF00113">
    <property type="entry name" value="Enolase_C"/>
    <property type="match status" value="1"/>
</dbReference>
<dbReference type="Pfam" id="PF03952">
    <property type="entry name" value="Enolase_N"/>
    <property type="match status" value="1"/>
</dbReference>
<dbReference type="PIRSF" id="PIRSF001400">
    <property type="entry name" value="Enolase"/>
    <property type="match status" value="1"/>
</dbReference>
<dbReference type="PRINTS" id="PR00148">
    <property type="entry name" value="ENOLASE"/>
</dbReference>
<dbReference type="SFLD" id="SFLDS00001">
    <property type="entry name" value="Enolase"/>
    <property type="match status" value="1"/>
</dbReference>
<dbReference type="SFLD" id="SFLDF00002">
    <property type="entry name" value="enolase"/>
    <property type="match status" value="1"/>
</dbReference>
<dbReference type="SMART" id="SM01192">
    <property type="entry name" value="Enolase_C"/>
    <property type="match status" value="1"/>
</dbReference>
<dbReference type="SMART" id="SM01193">
    <property type="entry name" value="Enolase_N"/>
    <property type="match status" value="1"/>
</dbReference>
<dbReference type="SUPFAM" id="SSF51604">
    <property type="entry name" value="Enolase C-terminal domain-like"/>
    <property type="match status" value="1"/>
</dbReference>
<dbReference type="SUPFAM" id="SSF54826">
    <property type="entry name" value="Enolase N-terminal domain-like"/>
    <property type="match status" value="1"/>
</dbReference>
<dbReference type="PROSITE" id="PS00164">
    <property type="entry name" value="ENOLASE"/>
    <property type="match status" value="1"/>
</dbReference>
<organism>
    <name type="scientific">Clavibacter michiganensis subsp. michiganensis (strain NCPPB 382)</name>
    <dbReference type="NCBI Taxonomy" id="443906"/>
    <lineage>
        <taxon>Bacteria</taxon>
        <taxon>Bacillati</taxon>
        <taxon>Actinomycetota</taxon>
        <taxon>Actinomycetes</taxon>
        <taxon>Micrococcales</taxon>
        <taxon>Microbacteriaceae</taxon>
        <taxon>Clavibacter</taxon>
    </lineage>
</organism>
<protein>
    <recommendedName>
        <fullName evidence="1">Enolase</fullName>
        <ecNumber evidence="1">4.2.1.11</ecNumber>
    </recommendedName>
    <alternativeName>
        <fullName evidence="1">2-phospho-D-glycerate hydro-lyase</fullName>
    </alternativeName>
    <alternativeName>
        <fullName evidence="1">2-phosphoglycerate dehydratase</fullName>
    </alternativeName>
</protein>
<sequence>MAAIEAVNAREILDSRGNPTVEVEVLLEDGTFTRAAVPSGASTGAFEAYELRDGDAGRYLGKGVQKAVAAVVDEIGPAIQDLDAADQRIIDATMIELDGTENKSRLGANALLGVSLAVAKAAADSAELPLYRYLGGPNAHTLPVPMLNVINGGSHADTNVDIQEFMLLPVGASTFSEGLRWGVETYHALKSLLKKKGLSTGLGDEGGFAPNLDSNRAALDLLMEAIDAAGFTAGKQIALGLDVASSEFYSDGAYTFEGQKVDAAHLTAYFADLVASYPLITIEDPLDEDDWAGYDHFTAELGAKVQIVGDDLFVTNPKRLADGITRGVANSILVKVNQIGTLTETLDAVSLAQRSGYTTVLSHRSGETEDTTIADLAVAVDAGQIKTGAPARSERVAKYNQLLRIEQDLGAAAVYAGRSAFPRFQA</sequence>
<accession>A5CTA8</accession>
<keyword id="KW-0963">Cytoplasm</keyword>
<keyword id="KW-0324">Glycolysis</keyword>
<keyword id="KW-0456">Lyase</keyword>
<keyword id="KW-0460">Magnesium</keyword>
<keyword id="KW-0479">Metal-binding</keyword>
<keyword id="KW-0964">Secreted</keyword>
<gene>
    <name evidence="1" type="primary">eno</name>
    <name type="ordered locus">CMM_2263</name>
</gene>
<name>ENO_CLAM3</name>
<reference key="1">
    <citation type="journal article" date="2008" name="J. Bacteriol.">
        <title>The genome sequence of the tomato-pathogenic actinomycete Clavibacter michiganensis subsp. michiganensis NCPPB382 reveals a large island involved in pathogenicity.</title>
        <authorList>
            <person name="Gartemann K.-H."/>
            <person name="Abt B."/>
            <person name="Bekel T."/>
            <person name="Burger A."/>
            <person name="Engemann J."/>
            <person name="Fluegel M."/>
            <person name="Gaigalat L."/>
            <person name="Goesmann A."/>
            <person name="Graefen I."/>
            <person name="Kalinowski J."/>
            <person name="Kaup O."/>
            <person name="Kirchner O."/>
            <person name="Krause L."/>
            <person name="Linke B."/>
            <person name="McHardy A."/>
            <person name="Meyer F."/>
            <person name="Pohle S."/>
            <person name="Rueckert C."/>
            <person name="Schneiker S."/>
            <person name="Zellermann E.-M."/>
            <person name="Puehler A."/>
            <person name="Eichenlaub R."/>
            <person name="Kaiser O."/>
            <person name="Bartels D."/>
        </authorList>
    </citation>
    <scope>NUCLEOTIDE SEQUENCE [LARGE SCALE GENOMIC DNA]</scope>
    <source>
        <strain>NCPPB 382</strain>
    </source>
</reference>
<evidence type="ECO:0000255" key="1">
    <source>
        <dbReference type="HAMAP-Rule" id="MF_00318"/>
    </source>
</evidence>